<organism>
    <name type="scientific">Rickettsia conorii (strain ATCC VR-613 / Malish 7)</name>
    <dbReference type="NCBI Taxonomy" id="272944"/>
    <lineage>
        <taxon>Bacteria</taxon>
        <taxon>Pseudomonadati</taxon>
        <taxon>Pseudomonadota</taxon>
        <taxon>Alphaproteobacteria</taxon>
        <taxon>Rickettsiales</taxon>
        <taxon>Rickettsiaceae</taxon>
        <taxon>Rickettsieae</taxon>
        <taxon>Rickettsia</taxon>
        <taxon>spotted fever group</taxon>
    </lineage>
</organism>
<proteinExistence type="inferred from homology"/>
<accession>Q92G58</accession>
<sequence>MSKDDLIQFTGTVLELLPNATFRVKLENDHVIIAHTSGRMRKNRIRILLGDKVMVEMTPYDLTKGRVIHRH</sequence>
<reference key="1">
    <citation type="journal article" date="2001" name="Science">
        <title>Mechanisms of evolution in Rickettsia conorii and R. prowazekii.</title>
        <authorList>
            <person name="Ogata H."/>
            <person name="Audic S."/>
            <person name="Renesto-Audiffren P."/>
            <person name="Fournier P.-E."/>
            <person name="Barbe V."/>
            <person name="Samson D."/>
            <person name="Roux V."/>
            <person name="Cossart P."/>
            <person name="Weissenbach J."/>
            <person name="Claverie J.-M."/>
            <person name="Raoult D."/>
        </authorList>
    </citation>
    <scope>NUCLEOTIDE SEQUENCE [LARGE SCALE GENOMIC DNA]</scope>
    <source>
        <strain>ATCC VR-613 / Malish 7</strain>
    </source>
</reference>
<name>IF1_RICCN</name>
<evidence type="ECO:0000255" key="1">
    <source>
        <dbReference type="HAMAP-Rule" id="MF_00075"/>
    </source>
</evidence>
<keyword id="KW-0963">Cytoplasm</keyword>
<keyword id="KW-0396">Initiation factor</keyword>
<keyword id="KW-0648">Protein biosynthesis</keyword>
<keyword id="KW-0694">RNA-binding</keyword>
<keyword id="KW-0699">rRNA-binding</keyword>
<feature type="chain" id="PRO_0000095853" description="Translation initiation factor IF-1">
    <location>
        <begin position="1"/>
        <end position="71"/>
    </location>
</feature>
<feature type="domain" description="S1-like" evidence="1">
    <location>
        <begin position="1"/>
        <end position="71"/>
    </location>
</feature>
<protein>
    <recommendedName>
        <fullName evidence="1">Translation initiation factor IF-1</fullName>
    </recommendedName>
</protein>
<gene>
    <name evidence="1" type="primary">infA</name>
    <name type="ordered locus">RC1265</name>
</gene>
<comment type="function">
    <text evidence="1">One of the essential components for the initiation of protein synthesis. Stabilizes the binding of IF-2 and IF-3 on the 30S subunit to which N-formylmethionyl-tRNA(fMet) subsequently binds. Helps modulate mRNA selection, yielding the 30S pre-initiation complex (PIC). Upon addition of the 50S ribosomal subunit IF-1, IF-2 and IF-3 are released leaving the mature 70S translation initiation complex.</text>
</comment>
<comment type="subunit">
    <text evidence="1">Component of the 30S ribosomal translation pre-initiation complex which assembles on the 30S ribosome in the order IF-2 and IF-3, IF-1 and N-formylmethionyl-tRNA(fMet); mRNA recruitment can occur at any time during PIC assembly.</text>
</comment>
<comment type="subcellular location">
    <subcellularLocation>
        <location evidence="1">Cytoplasm</location>
    </subcellularLocation>
</comment>
<comment type="similarity">
    <text evidence="1">Belongs to the IF-1 family.</text>
</comment>
<dbReference type="EMBL" id="AE006914">
    <property type="protein sequence ID" value="AAL03803.1"/>
    <property type="molecule type" value="Genomic_DNA"/>
</dbReference>
<dbReference type="PIR" id="A97858">
    <property type="entry name" value="A97858"/>
</dbReference>
<dbReference type="RefSeq" id="WP_010977828.1">
    <property type="nucleotide sequence ID" value="NC_003103.1"/>
</dbReference>
<dbReference type="SMR" id="Q92G58"/>
<dbReference type="GeneID" id="928419"/>
<dbReference type="KEGG" id="rco:RC1265"/>
<dbReference type="HOGENOM" id="CLU_151267_1_0_5"/>
<dbReference type="Proteomes" id="UP000000816">
    <property type="component" value="Chromosome"/>
</dbReference>
<dbReference type="GO" id="GO:0005829">
    <property type="term" value="C:cytosol"/>
    <property type="evidence" value="ECO:0007669"/>
    <property type="project" value="TreeGrafter"/>
</dbReference>
<dbReference type="GO" id="GO:0043022">
    <property type="term" value="F:ribosome binding"/>
    <property type="evidence" value="ECO:0007669"/>
    <property type="project" value="UniProtKB-UniRule"/>
</dbReference>
<dbReference type="GO" id="GO:0019843">
    <property type="term" value="F:rRNA binding"/>
    <property type="evidence" value="ECO:0007669"/>
    <property type="project" value="UniProtKB-UniRule"/>
</dbReference>
<dbReference type="GO" id="GO:0003743">
    <property type="term" value="F:translation initiation factor activity"/>
    <property type="evidence" value="ECO:0007669"/>
    <property type="project" value="UniProtKB-UniRule"/>
</dbReference>
<dbReference type="CDD" id="cd04451">
    <property type="entry name" value="S1_IF1"/>
    <property type="match status" value="1"/>
</dbReference>
<dbReference type="FunFam" id="2.40.50.140:FF:000002">
    <property type="entry name" value="Translation initiation factor IF-1"/>
    <property type="match status" value="1"/>
</dbReference>
<dbReference type="Gene3D" id="2.40.50.140">
    <property type="entry name" value="Nucleic acid-binding proteins"/>
    <property type="match status" value="1"/>
</dbReference>
<dbReference type="HAMAP" id="MF_00075">
    <property type="entry name" value="IF_1"/>
    <property type="match status" value="1"/>
</dbReference>
<dbReference type="InterPro" id="IPR012340">
    <property type="entry name" value="NA-bd_OB-fold"/>
</dbReference>
<dbReference type="InterPro" id="IPR006196">
    <property type="entry name" value="RNA-binding_domain_S1_IF1"/>
</dbReference>
<dbReference type="InterPro" id="IPR004368">
    <property type="entry name" value="TIF_IF1"/>
</dbReference>
<dbReference type="NCBIfam" id="TIGR00008">
    <property type="entry name" value="infA"/>
    <property type="match status" value="1"/>
</dbReference>
<dbReference type="PANTHER" id="PTHR33370">
    <property type="entry name" value="TRANSLATION INITIATION FACTOR IF-1, CHLOROPLASTIC"/>
    <property type="match status" value="1"/>
</dbReference>
<dbReference type="PANTHER" id="PTHR33370:SF1">
    <property type="entry name" value="TRANSLATION INITIATION FACTOR IF-1, CHLOROPLASTIC"/>
    <property type="match status" value="1"/>
</dbReference>
<dbReference type="Pfam" id="PF01176">
    <property type="entry name" value="eIF-1a"/>
    <property type="match status" value="1"/>
</dbReference>
<dbReference type="SUPFAM" id="SSF50249">
    <property type="entry name" value="Nucleic acid-binding proteins"/>
    <property type="match status" value="1"/>
</dbReference>
<dbReference type="PROSITE" id="PS50832">
    <property type="entry name" value="S1_IF1_TYPE"/>
    <property type="match status" value="1"/>
</dbReference>